<name>SAHH_PROMA</name>
<keyword id="KW-0963">Cytoplasm</keyword>
<keyword id="KW-0378">Hydrolase</keyword>
<keyword id="KW-0520">NAD</keyword>
<keyword id="KW-0554">One-carbon metabolism</keyword>
<keyword id="KW-1185">Reference proteome</keyword>
<sequence length="476" mass="51869">MVTAAASTSQVVGDSDFVVADITLADFGRKELAIAEKEMPGLMSLRDKYGQEKPLQGARIAGSLHMTIQTGVLIETLVALGAQVRWASCNIFSTQDHAAAAIAKAGVPVFAKKGETLSEYWSFTHSILEWSGEQGPNMILDDGGDATGLVILGSKAEKDISVLDNPSNEEEIALYASIKSKLSTDKSFYSRIKKIILGVTEETTTGVARLYQMQKNGELPFPAINVNDSVTKSKFDNLYGCRESLVDGIKRATDVMVAGKVALVIGYGDVGKGSAQSLRGLGATVMIAEIDPICALQAAMEGYRVVRLDDVVEEIDIFVTATGNFQVICHDHLIRMKDEAIVSNIGHFDNEIDVASLKSYQWENIKPQVDHITLPSGNKIILLAEGRLVNLGCATGHPSFVMSNSFTNQVLAQIELFKKGDSYQNNVYVLPKHLDEMVARLHLDKIGANLTELSKEQADYINVPIEGPYKSEQYRY</sequence>
<evidence type="ECO:0000255" key="1">
    <source>
        <dbReference type="HAMAP-Rule" id="MF_00563"/>
    </source>
</evidence>
<comment type="function">
    <text evidence="1">May play a key role in the regulation of the intracellular concentration of adenosylhomocysteine.</text>
</comment>
<comment type="catalytic activity">
    <reaction evidence="1">
        <text>S-adenosyl-L-homocysteine + H2O = L-homocysteine + adenosine</text>
        <dbReference type="Rhea" id="RHEA:21708"/>
        <dbReference type="ChEBI" id="CHEBI:15377"/>
        <dbReference type="ChEBI" id="CHEBI:16335"/>
        <dbReference type="ChEBI" id="CHEBI:57856"/>
        <dbReference type="ChEBI" id="CHEBI:58199"/>
        <dbReference type="EC" id="3.13.2.1"/>
    </reaction>
</comment>
<comment type="cofactor">
    <cofactor evidence="1">
        <name>NAD(+)</name>
        <dbReference type="ChEBI" id="CHEBI:57540"/>
    </cofactor>
    <text evidence="1">Binds 1 NAD(+) per subunit.</text>
</comment>
<comment type="pathway">
    <text evidence="1">Amino-acid biosynthesis; L-homocysteine biosynthesis; L-homocysteine from S-adenosyl-L-homocysteine: step 1/1.</text>
</comment>
<comment type="subcellular location">
    <subcellularLocation>
        <location evidence="1">Cytoplasm</location>
    </subcellularLocation>
</comment>
<comment type="similarity">
    <text evidence="1">Belongs to the adenosylhomocysteinase family.</text>
</comment>
<proteinExistence type="inferred from homology"/>
<organism>
    <name type="scientific">Prochlorococcus marinus (strain SARG / CCMP1375 / SS120)</name>
    <dbReference type="NCBI Taxonomy" id="167539"/>
    <lineage>
        <taxon>Bacteria</taxon>
        <taxon>Bacillati</taxon>
        <taxon>Cyanobacteriota</taxon>
        <taxon>Cyanophyceae</taxon>
        <taxon>Synechococcales</taxon>
        <taxon>Prochlorococcaceae</taxon>
        <taxon>Prochlorococcus</taxon>
    </lineage>
</organism>
<reference key="1">
    <citation type="journal article" date="2003" name="Proc. Natl. Acad. Sci. U.S.A.">
        <title>Genome sequence of the cyanobacterium Prochlorococcus marinus SS120, a nearly minimal oxyphototrophic genome.</title>
        <authorList>
            <person name="Dufresne A."/>
            <person name="Salanoubat M."/>
            <person name="Partensky F."/>
            <person name="Artiguenave F."/>
            <person name="Axmann I.M."/>
            <person name="Barbe V."/>
            <person name="Duprat S."/>
            <person name="Galperin M.Y."/>
            <person name="Koonin E.V."/>
            <person name="Le Gall F."/>
            <person name="Makarova K.S."/>
            <person name="Ostrowski M."/>
            <person name="Oztas S."/>
            <person name="Robert C."/>
            <person name="Rogozin I.B."/>
            <person name="Scanlan D.J."/>
            <person name="Tandeau de Marsac N."/>
            <person name="Weissenbach J."/>
            <person name="Wincker P."/>
            <person name="Wolf Y.I."/>
            <person name="Hess W.R."/>
        </authorList>
    </citation>
    <scope>NUCLEOTIDE SEQUENCE [LARGE SCALE GENOMIC DNA]</scope>
    <source>
        <strain>SARG / CCMP1375 / SS120</strain>
    </source>
</reference>
<accession>Q7V9P3</accession>
<protein>
    <recommendedName>
        <fullName evidence="1">Adenosylhomocysteinase</fullName>
        <ecNumber evidence="1">3.13.2.1</ecNumber>
    </recommendedName>
    <alternativeName>
        <fullName evidence="1">S-adenosyl-L-homocysteine hydrolase</fullName>
        <shortName evidence="1">AdoHcyase</shortName>
    </alternativeName>
</protein>
<feature type="chain" id="PRO_0000116974" description="Adenosylhomocysteinase">
    <location>
        <begin position="1"/>
        <end position="476"/>
    </location>
</feature>
<feature type="binding site" evidence="1">
    <location>
        <position position="67"/>
    </location>
    <ligand>
        <name>substrate</name>
    </ligand>
</feature>
<feature type="binding site" evidence="1">
    <location>
        <position position="142"/>
    </location>
    <ligand>
        <name>substrate</name>
    </ligand>
</feature>
<feature type="binding site" evidence="1">
    <location>
        <position position="202"/>
    </location>
    <ligand>
        <name>substrate</name>
    </ligand>
</feature>
<feature type="binding site" evidence="1">
    <location>
        <begin position="203"/>
        <end position="205"/>
    </location>
    <ligand>
        <name>NAD(+)</name>
        <dbReference type="ChEBI" id="CHEBI:57540"/>
    </ligand>
</feature>
<feature type="binding site" evidence="1">
    <location>
        <position position="232"/>
    </location>
    <ligand>
        <name>substrate</name>
    </ligand>
</feature>
<feature type="binding site" evidence="1">
    <location>
        <position position="236"/>
    </location>
    <ligand>
        <name>substrate</name>
    </ligand>
</feature>
<feature type="binding site" evidence="1">
    <location>
        <position position="237"/>
    </location>
    <ligand>
        <name>NAD(+)</name>
        <dbReference type="ChEBI" id="CHEBI:57540"/>
    </ligand>
</feature>
<feature type="binding site" evidence="1">
    <location>
        <begin position="266"/>
        <end position="271"/>
    </location>
    <ligand>
        <name>NAD(+)</name>
        <dbReference type="ChEBI" id="CHEBI:57540"/>
    </ligand>
</feature>
<feature type="binding site" evidence="1">
    <location>
        <position position="289"/>
    </location>
    <ligand>
        <name>NAD(+)</name>
        <dbReference type="ChEBI" id="CHEBI:57540"/>
    </ligand>
</feature>
<feature type="binding site" evidence="1">
    <location>
        <position position="324"/>
    </location>
    <ligand>
        <name>NAD(+)</name>
        <dbReference type="ChEBI" id="CHEBI:57540"/>
    </ligand>
</feature>
<feature type="binding site" evidence="1">
    <location>
        <begin position="345"/>
        <end position="347"/>
    </location>
    <ligand>
        <name>NAD(+)</name>
        <dbReference type="ChEBI" id="CHEBI:57540"/>
    </ligand>
</feature>
<feature type="binding site" evidence="1">
    <location>
        <position position="390"/>
    </location>
    <ligand>
        <name>NAD(+)</name>
        <dbReference type="ChEBI" id="CHEBI:57540"/>
    </ligand>
</feature>
<dbReference type="EC" id="3.13.2.1" evidence="1"/>
<dbReference type="EMBL" id="AE017126">
    <property type="protein sequence ID" value="AAQ00830.1"/>
    <property type="molecule type" value="Genomic_DNA"/>
</dbReference>
<dbReference type="RefSeq" id="NP_876177.1">
    <property type="nucleotide sequence ID" value="NC_005042.1"/>
</dbReference>
<dbReference type="RefSeq" id="WP_011125935.1">
    <property type="nucleotide sequence ID" value="NC_005042.1"/>
</dbReference>
<dbReference type="SMR" id="Q7V9P3"/>
<dbReference type="STRING" id="167539.Pro_1786"/>
<dbReference type="EnsemblBacteria" id="AAQ00830">
    <property type="protein sequence ID" value="AAQ00830"/>
    <property type="gene ID" value="Pro_1786"/>
</dbReference>
<dbReference type="KEGG" id="pma:Pro_1786"/>
<dbReference type="PATRIC" id="fig|167539.5.peg.1887"/>
<dbReference type="eggNOG" id="COG0499">
    <property type="taxonomic scope" value="Bacteria"/>
</dbReference>
<dbReference type="HOGENOM" id="CLU_025194_2_1_3"/>
<dbReference type="OrthoDB" id="9802717at2"/>
<dbReference type="UniPathway" id="UPA00314">
    <property type="reaction ID" value="UER00076"/>
</dbReference>
<dbReference type="Proteomes" id="UP000001420">
    <property type="component" value="Chromosome"/>
</dbReference>
<dbReference type="GO" id="GO:0005829">
    <property type="term" value="C:cytosol"/>
    <property type="evidence" value="ECO:0007669"/>
    <property type="project" value="TreeGrafter"/>
</dbReference>
<dbReference type="GO" id="GO:0004013">
    <property type="term" value="F:adenosylhomocysteinase activity"/>
    <property type="evidence" value="ECO:0007669"/>
    <property type="project" value="UniProtKB-UniRule"/>
</dbReference>
<dbReference type="GO" id="GO:0071269">
    <property type="term" value="P:L-homocysteine biosynthetic process"/>
    <property type="evidence" value="ECO:0007669"/>
    <property type="project" value="UniProtKB-UniRule"/>
</dbReference>
<dbReference type="GO" id="GO:0006730">
    <property type="term" value="P:one-carbon metabolic process"/>
    <property type="evidence" value="ECO:0007669"/>
    <property type="project" value="UniProtKB-KW"/>
</dbReference>
<dbReference type="GO" id="GO:0033353">
    <property type="term" value="P:S-adenosylmethionine cycle"/>
    <property type="evidence" value="ECO:0007669"/>
    <property type="project" value="TreeGrafter"/>
</dbReference>
<dbReference type="CDD" id="cd00401">
    <property type="entry name" value="SAHH"/>
    <property type="match status" value="1"/>
</dbReference>
<dbReference type="FunFam" id="3.40.50.720:FF:000004">
    <property type="entry name" value="Adenosylhomocysteinase"/>
    <property type="match status" value="1"/>
</dbReference>
<dbReference type="Gene3D" id="3.40.50.1480">
    <property type="entry name" value="Adenosylhomocysteinase-like"/>
    <property type="match status" value="1"/>
</dbReference>
<dbReference type="Gene3D" id="3.40.50.720">
    <property type="entry name" value="NAD(P)-binding Rossmann-like Domain"/>
    <property type="match status" value="1"/>
</dbReference>
<dbReference type="HAMAP" id="MF_00563">
    <property type="entry name" value="AdoHcyase"/>
    <property type="match status" value="1"/>
</dbReference>
<dbReference type="InterPro" id="IPR042172">
    <property type="entry name" value="Adenosylhomocyst_ase-like_sf"/>
</dbReference>
<dbReference type="InterPro" id="IPR000043">
    <property type="entry name" value="Adenosylhomocysteinase-like"/>
</dbReference>
<dbReference type="InterPro" id="IPR015878">
    <property type="entry name" value="Ado_hCys_hydrolase_NAD-bd"/>
</dbReference>
<dbReference type="InterPro" id="IPR036291">
    <property type="entry name" value="NAD(P)-bd_dom_sf"/>
</dbReference>
<dbReference type="InterPro" id="IPR020082">
    <property type="entry name" value="S-Ado-L-homoCys_hydrolase_CS"/>
</dbReference>
<dbReference type="NCBIfam" id="TIGR00936">
    <property type="entry name" value="ahcY"/>
    <property type="match status" value="1"/>
</dbReference>
<dbReference type="NCBIfam" id="NF004005">
    <property type="entry name" value="PRK05476.2-3"/>
    <property type="match status" value="1"/>
</dbReference>
<dbReference type="PANTHER" id="PTHR23420">
    <property type="entry name" value="ADENOSYLHOMOCYSTEINASE"/>
    <property type="match status" value="1"/>
</dbReference>
<dbReference type="PANTHER" id="PTHR23420:SF0">
    <property type="entry name" value="ADENOSYLHOMOCYSTEINASE"/>
    <property type="match status" value="1"/>
</dbReference>
<dbReference type="Pfam" id="PF05221">
    <property type="entry name" value="AdoHcyase"/>
    <property type="match status" value="1"/>
</dbReference>
<dbReference type="Pfam" id="PF00670">
    <property type="entry name" value="AdoHcyase_NAD"/>
    <property type="match status" value="1"/>
</dbReference>
<dbReference type="PIRSF" id="PIRSF001109">
    <property type="entry name" value="Ad_hcy_hydrolase"/>
    <property type="match status" value="1"/>
</dbReference>
<dbReference type="SMART" id="SM00996">
    <property type="entry name" value="AdoHcyase"/>
    <property type="match status" value="1"/>
</dbReference>
<dbReference type="SMART" id="SM00997">
    <property type="entry name" value="AdoHcyase_NAD"/>
    <property type="match status" value="1"/>
</dbReference>
<dbReference type="SUPFAM" id="SSF52283">
    <property type="entry name" value="Formate/glycerate dehydrogenase catalytic domain-like"/>
    <property type="match status" value="1"/>
</dbReference>
<dbReference type="SUPFAM" id="SSF51735">
    <property type="entry name" value="NAD(P)-binding Rossmann-fold domains"/>
    <property type="match status" value="1"/>
</dbReference>
<dbReference type="PROSITE" id="PS00738">
    <property type="entry name" value="ADOHCYASE_1"/>
    <property type="match status" value="1"/>
</dbReference>
<dbReference type="PROSITE" id="PS00739">
    <property type="entry name" value="ADOHCYASE_2"/>
    <property type="match status" value="1"/>
</dbReference>
<gene>
    <name evidence="1" type="primary">ahcY</name>
    <name type="synonym">sam1</name>
    <name type="ordered locus">Pro_1786</name>
</gene>